<reference key="1">
    <citation type="journal article" date="2008" name="PLoS Genet.">
        <title>Genomic islands in the pathogenic filamentous fungus Aspergillus fumigatus.</title>
        <authorList>
            <person name="Fedorova N.D."/>
            <person name="Khaldi N."/>
            <person name="Joardar V.S."/>
            <person name="Maiti R."/>
            <person name="Amedeo P."/>
            <person name="Anderson M.J."/>
            <person name="Crabtree J."/>
            <person name="Silva J.C."/>
            <person name="Badger J.H."/>
            <person name="Albarraq A."/>
            <person name="Angiuoli S."/>
            <person name="Bussey H."/>
            <person name="Bowyer P."/>
            <person name="Cotty P.J."/>
            <person name="Dyer P.S."/>
            <person name="Egan A."/>
            <person name="Galens K."/>
            <person name="Fraser-Liggett C.M."/>
            <person name="Haas B.J."/>
            <person name="Inman J.M."/>
            <person name="Kent R."/>
            <person name="Lemieux S."/>
            <person name="Malavazi I."/>
            <person name="Orvis J."/>
            <person name="Roemer T."/>
            <person name="Ronning C.M."/>
            <person name="Sundaram J.P."/>
            <person name="Sutton G."/>
            <person name="Turner G."/>
            <person name="Venter J.C."/>
            <person name="White O.R."/>
            <person name="Whitty B.R."/>
            <person name="Youngman P."/>
            <person name="Wolfe K.H."/>
            <person name="Goldman G.H."/>
            <person name="Wortman J.R."/>
            <person name="Jiang B."/>
            <person name="Denning D.W."/>
            <person name="Nierman W.C."/>
        </authorList>
    </citation>
    <scope>NUCLEOTIDE SEQUENCE [LARGE SCALE GENOMIC DNA]</scope>
    <source>
        <strain>CBS 144.89 / FGSC A1163 / CEA10</strain>
    </source>
</reference>
<protein>
    <recommendedName>
        <fullName>Neutral protease 2 homolog AFUB_100460</fullName>
        <ecNumber>3.4.24.39</ecNumber>
    </recommendedName>
    <alternativeName>
        <fullName>Deuterolysin AFUB_100460</fullName>
    </alternativeName>
</protein>
<evidence type="ECO:0000250" key="1"/>
<evidence type="ECO:0000255" key="2"/>
<evidence type="ECO:0000255" key="3">
    <source>
        <dbReference type="PROSITE-ProRule" id="PRU10095"/>
    </source>
</evidence>
<evidence type="ECO:0000305" key="4"/>
<name>NPIIA_ASPFC</name>
<dbReference type="EC" id="3.4.24.39"/>
<dbReference type="EMBL" id="DS499603">
    <property type="protein sequence ID" value="EDP47444.1"/>
    <property type="status" value="ALT_SEQ"/>
    <property type="molecule type" value="Genomic_DNA"/>
</dbReference>
<dbReference type="SMR" id="B0YEV0"/>
<dbReference type="MEROPS" id="M35.002"/>
<dbReference type="OrthoDB" id="105382at5052"/>
<dbReference type="PhylomeDB" id="B0YEV0"/>
<dbReference type="Proteomes" id="UP000001699">
    <property type="component" value="Unassembled WGS sequence"/>
</dbReference>
<dbReference type="GO" id="GO:0005576">
    <property type="term" value="C:extracellular region"/>
    <property type="evidence" value="ECO:0007669"/>
    <property type="project" value="UniProtKB-SubCell"/>
</dbReference>
<dbReference type="GO" id="GO:0046872">
    <property type="term" value="F:metal ion binding"/>
    <property type="evidence" value="ECO:0007669"/>
    <property type="project" value="UniProtKB-KW"/>
</dbReference>
<dbReference type="GO" id="GO:0004222">
    <property type="term" value="F:metalloendopeptidase activity"/>
    <property type="evidence" value="ECO:0007669"/>
    <property type="project" value="InterPro"/>
</dbReference>
<dbReference type="GO" id="GO:0006508">
    <property type="term" value="P:proteolysis"/>
    <property type="evidence" value="ECO:0007669"/>
    <property type="project" value="UniProtKB-KW"/>
</dbReference>
<dbReference type="CDD" id="cd11008">
    <property type="entry name" value="M35_deuterolysin_like"/>
    <property type="match status" value="1"/>
</dbReference>
<dbReference type="Gene3D" id="2.60.40.2970">
    <property type="match status" value="1"/>
</dbReference>
<dbReference type="Gene3D" id="3.40.390.10">
    <property type="entry name" value="Collagenase (Catalytic Domain)"/>
    <property type="match status" value="1"/>
</dbReference>
<dbReference type="InterPro" id="IPR050414">
    <property type="entry name" value="Fungal_M35_metalloproteases"/>
</dbReference>
<dbReference type="InterPro" id="IPR029463">
    <property type="entry name" value="Lys_MEP"/>
</dbReference>
<dbReference type="InterPro" id="IPR024079">
    <property type="entry name" value="MetalloPept_cat_dom_sf"/>
</dbReference>
<dbReference type="InterPro" id="IPR001384">
    <property type="entry name" value="Peptidase_M35"/>
</dbReference>
<dbReference type="PANTHER" id="PTHR37016">
    <property type="match status" value="1"/>
</dbReference>
<dbReference type="PANTHER" id="PTHR37016:SF3">
    <property type="entry name" value="NEUTRAL PROTEASE 2-RELATED"/>
    <property type="match status" value="1"/>
</dbReference>
<dbReference type="Pfam" id="PF02102">
    <property type="entry name" value="Peptidase_M35"/>
    <property type="match status" value="1"/>
</dbReference>
<dbReference type="PRINTS" id="PR00768">
    <property type="entry name" value="DEUTEROLYSIN"/>
</dbReference>
<dbReference type="SMART" id="SM01351">
    <property type="entry name" value="Aspzincin_M35"/>
    <property type="match status" value="1"/>
</dbReference>
<dbReference type="SUPFAM" id="SSF55486">
    <property type="entry name" value="Metalloproteases ('zincins'), catalytic domain"/>
    <property type="match status" value="1"/>
</dbReference>
<dbReference type="PROSITE" id="PS00142">
    <property type="entry name" value="ZINC_PROTEASE"/>
    <property type="match status" value="1"/>
</dbReference>
<proteinExistence type="inferred from homology"/>
<accession>B0YEV0</accession>
<organism>
    <name type="scientific">Aspergillus fumigatus (strain CBS 144.89 / FGSC A1163 / CEA10)</name>
    <name type="common">Neosartorya fumigata</name>
    <dbReference type="NCBI Taxonomy" id="451804"/>
    <lineage>
        <taxon>Eukaryota</taxon>
        <taxon>Fungi</taxon>
        <taxon>Dikarya</taxon>
        <taxon>Ascomycota</taxon>
        <taxon>Pezizomycotina</taxon>
        <taxon>Eurotiomycetes</taxon>
        <taxon>Eurotiomycetidae</taxon>
        <taxon>Eurotiales</taxon>
        <taxon>Aspergillaceae</taxon>
        <taxon>Aspergillus</taxon>
        <taxon>Aspergillus subgen. Fumigati</taxon>
    </lineage>
</organism>
<feature type="signal peptide" evidence="2">
    <location>
        <begin position="1"/>
        <end position="19"/>
    </location>
</feature>
<feature type="propeptide" id="PRO_0000407088" evidence="1">
    <location>
        <begin position="20"/>
        <end position="172"/>
    </location>
</feature>
<feature type="chain" id="PRO_0000407089" description="Neutral protease 2 homolog AFUB_100460">
    <location>
        <begin position="173"/>
        <end position="355"/>
    </location>
</feature>
<feature type="active site" evidence="3">
    <location>
        <position position="301"/>
    </location>
</feature>
<feature type="binding site" evidence="3">
    <location>
        <position position="300"/>
    </location>
    <ligand>
        <name>Zn(2+)</name>
        <dbReference type="ChEBI" id="CHEBI:29105"/>
        <note>catalytic</note>
    </ligand>
</feature>
<feature type="binding site" evidence="3">
    <location>
        <position position="304"/>
    </location>
    <ligand>
        <name>Zn(2+)</name>
        <dbReference type="ChEBI" id="CHEBI:29105"/>
        <note>catalytic</note>
    </ligand>
</feature>
<feature type="binding site" evidence="3">
    <location>
        <position position="315"/>
    </location>
    <ligand>
        <name>Zn(2+)</name>
        <dbReference type="ChEBI" id="CHEBI:29105"/>
        <note>catalytic</note>
    </ligand>
</feature>
<feature type="disulfide bond" evidence="1">
    <location>
        <begin position="179"/>
        <end position="251"/>
    </location>
</feature>
<feature type="disulfide bond" evidence="1">
    <location>
        <begin position="258"/>
        <end position="276"/>
    </location>
</feature>
<gene>
    <name type="ORF">AFUB_100460</name>
</gene>
<comment type="function">
    <text evidence="1">Secreted metalloproteinase that allows assimilation of proteinaceous substrates. Shows high activities on basic nuclear substrates such as histone and protamine. May be involved in virulence (By similarity).</text>
</comment>
<comment type="catalytic activity">
    <reaction>
        <text>Preferential cleavage of bonds with hydrophobic residues in P1'. Also 3-Asn-|-Gln-4 and 8-Gly-|-Ser-9 bonds in insulin B chain.</text>
        <dbReference type="EC" id="3.4.24.39"/>
    </reaction>
</comment>
<comment type="cofactor">
    <cofactor evidence="1">
        <name>Zn(2+)</name>
        <dbReference type="ChEBI" id="CHEBI:29105"/>
    </cofactor>
    <text evidence="1">Binds 1 zinc ion per subunit.</text>
</comment>
<comment type="subcellular location">
    <subcellularLocation>
        <location evidence="1">Secreted</location>
    </subcellularLocation>
</comment>
<comment type="similarity">
    <text evidence="4">Belongs to the peptidase M35 family.</text>
</comment>
<comment type="sequence caution" evidence="4">
    <conflict type="erroneous gene model prediction">
        <sequence resource="EMBL-CDS" id="EDP47444"/>
    </conflict>
</comment>
<sequence>MKITALASAILAVAQGALALPARAPALDITLSQVNNTRIKAVVKNSGTEKITFVHLNFFNDPSPVKKVSLYRNATEVEFTGIKQRLRSDGLSNDALTTLAPGATYEDEFDIASTANLTQGGPVTVRTQGFVPIAMNNKIAGYIPYSSNELELEVDAEKAVAVPASIKPLDRRTKITSSCTGNRATVLNTALRNAASIASKAADAASSGSSALFTEYFKSTSGNIRSAVAARLKAVASEASMNGGGSTTYYCSDPYGYCDSNVLAYTLPSTNEVVNCELFYTLQEVTNDCHGQDQATTIIHEFTHAPGVYPPGTEDLGYGYSAATALSTSNALNNADSYALFANGTSSFCVMTAFS</sequence>
<keyword id="KW-0165">Cleavage on pair of basic residues</keyword>
<keyword id="KW-1015">Disulfide bond</keyword>
<keyword id="KW-0378">Hydrolase</keyword>
<keyword id="KW-0479">Metal-binding</keyword>
<keyword id="KW-0482">Metalloprotease</keyword>
<keyword id="KW-0645">Protease</keyword>
<keyword id="KW-0964">Secreted</keyword>
<keyword id="KW-0732">Signal</keyword>
<keyword id="KW-0843">Virulence</keyword>
<keyword id="KW-0862">Zinc</keyword>
<keyword id="KW-0865">Zymogen</keyword>